<proteinExistence type="evidence at protein level"/>
<reference key="1">
    <citation type="journal article" date="1996" name="Mamm. Genome">
        <title>Molecular cloning, chromosomal mapping, and expression of the mouse p107 gene.</title>
        <authorList>
            <person name="Huppi K."/>
            <person name="Siwarski D."/>
            <person name="Mock B.A."/>
            <person name="Dosik J."/>
            <person name="Hamel P.A."/>
        </authorList>
    </citation>
    <scope>NUCLEOTIDE SEQUENCE [MRNA]</scope>
    <source>
        <strain>BALB/cJ</strain>
    </source>
</reference>
<reference key="2">
    <citation type="journal article" date="1995" name="Genomics">
        <title>Developmental expression of p107 mRNA and evidence for alternative splicing of the p107 (RBL1) gene product.</title>
        <authorList>
            <person name="Kim K.K."/>
            <person name="Soonpaa M.H."/>
            <person name="Wang H."/>
            <person name="Field L.J."/>
        </authorList>
    </citation>
    <scope>NUCLEOTIDE SEQUENCE [MRNA] (ISOFORMS LONG AND SHORT)</scope>
</reference>
<reference key="3">
    <citation type="submission" date="1997-03" db="EMBL/GenBank/DDBJ databases">
        <authorList>
            <person name="Kim K.K."/>
            <person name="Soonpaa M.H."/>
            <person name="Wang H."/>
            <person name="Field L.J."/>
        </authorList>
    </citation>
    <scope>SEQUENCE REVISION</scope>
</reference>
<reference key="4">
    <citation type="journal article" date="2005" name="Science">
        <title>The transcriptional landscape of the mammalian genome.</title>
        <authorList>
            <person name="Carninci P."/>
            <person name="Kasukawa T."/>
            <person name="Katayama S."/>
            <person name="Gough J."/>
            <person name="Frith M.C."/>
            <person name="Maeda N."/>
            <person name="Oyama R."/>
            <person name="Ravasi T."/>
            <person name="Lenhard B."/>
            <person name="Wells C."/>
            <person name="Kodzius R."/>
            <person name="Shimokawa K."/>
            <person name="Bajic V.B."/>
            <person name="Brenner S.E."/>
            <person name="Batalov S."/>
            <person name="Forrest A.R."/>
            <person name="Zavolan M."/>
            <person name="Davis M.J."/>
            <person name="Wilming L.G."/>
            <person name="Aidinis V."/>
            <person name="Allen J.E."/>
            <person name="Ambesi-Impiombato A."/>
            <person name="Apweiler R."/>
            <person name="Aturaliya R.N."/>
            <person name="Bailey T.L."/>
            <person name="Bansal M."/>
            <person name="Baxter L."/>
            <person name="Beisel K.W."/>
            <person name="Bersano T."/>
            <person name="Bono H."/>
            <person name="Chalk A.M."/>
            <person name="Chiu K.P."/>
            <person name="Choudhary V."/>
            <person name="Christoffels A."/>
            <person name="Clutterbuck D.R."/>
            <person name="Crowe M.L."/>
            <person name="Dalla E."/>
            <person name="Dalrymple B.P."/>
            <person name="de Bono B."/>
            <person name="Della Gatta G."/>
            <person name="di Bernardo D."/>
            <person name="Down T."/>
            <person name="Engstrom P."/>
            <person name="Fagiolini M."/>
            <person name="Faulkner G."/>
            <person name="Fletcher C.F."/>
            <person name="Fukushima T."/>
            <person name="Furuno M."/>
            <person name="Futaki S."/>
            <person name="Gariboldi M."/>
            <person name="Georgii-Hemming P."/>
            <person name="Gingeras T.R."/>
            <person name="Gojobori T."/>
            <person name="Green R.E."/>
            <person name="Gustincich S."/>
            <person name="Harbers M."/>
            <person name="Hayashi Y."/>
            <person name="Hensch T.K."/>
            <person name="Hirokawa N."/>
            <person name="Hill D."/>
            <person name="Huminiecki L."/>
            <person name="Iacono M."/>
            <person name="Ikeo K."/>
            <person name="Iwama A."/>
            <person name="Ishikawa T."/>
            <person name="Jakt M."/>
            <person name="Kanapin A."/>
            <person name="Katoh M."/>
            <person name="Kawasawa Y."/>
            <person name="Kelso J."/>
            <person name="Kitamura H."/>
            <person name="Kitano H."/>
            <person name="Kollias G."/>
            <person name="Krishnan S.P."/>
            <person name="Kruger A."/>
            <person name="Kummerfeld S.K."/>
            <person name="Kurochkin I.V."/>
            <person name="Lareau L.F."/>
            <person name="Lazarevic D."/>
            <person name="Lipovich L."/>
            <person name="Liu J."/>
            <person name="Liuni S."/>
            <person name="McWilliam S."/>
            <person name="Madan Babu M."/>
            <person name="Madera M."/>
            <person name="Marchionni L."/>
            <person name="Matsuda H."/>
            <person name="Matsuzawa S."/>
            <person name="Miki H."/>
            <person name="Mignone F."/>
            <person name="Miyake S."/>
            <person name="Morris K."/>
            <person name="Mottagui-Tabar S."/>
            <person name="Mulder N."/>
            <person name="Nakano N."/>
            <person name="Nakauchi H."/>
            <person name="Ng P."/>
            <person name="Nilsson R."/>
            <person name="Nishiguchi S."/>
            <person name="Nishikawa S."/>
            <person name="Nori F."/>
            <person name="Ohara O."/>
            <person name="Okazaki Y."/>
            <person name="Orlando V."/>
            <person name="Pang K.C."/>
            <person name="Pavan W.J."/>
            <person name="Pavesi G."/>
            <person name="Pesole G."/>
            <person name="Petrovsky N."/>
            <person name="Piazza S."/>
            <person name="Reed J."/>
            <person name="Reid J.F."/>
            <person name="Ring B.Z."/>
            <person name="Ringwald M."/>
            <person name="Rost B."/>
            <person name="Ruan Y."/>
            <person name="Salzberg S.L."/>
            <person name="Sandelin A."/>
            <person name="Schneider C."/>
            <person name="Schoenbach C."/>
            <person name="Sekiguchi K."/>
            <person name="Semple C.A."/>
            <person name="Seno S."/>
            <person name="Sessa L."/>
            <person name="Sheng Y."/>
            <person name="Shibata Y."/>
            <person name="Shimada H."/>
            <person name="Shimada K."/>
            <person name="Silva D."/>
            <person name="Sinclair B."/>
            <person name="Sperling S."/>
            <person name="Stupka E."/>
            <person name="Sugiura K."/>
            <person name="Sultana R."/>
            <person name="Takenaka Y."/>
            <person name="Taki K."/>
            <person name="Tammoja K."/>
            <person name="Tan S.L."/>
            <person name="Tang S."/>
            <person name="Taylor M.S."/>
            <person name="Tegner J."/>
            <person name="Teichmann S.A."/>
            <person name="Ueda H.R."/>
            <person name="van Nimwegen E."/>
            <person name="Verardo R."/>
            <person name="Wei C.L."/>
            <person name="Yagi K."/>
            <person name="Yamanishi H."/>
            <person name="Zabarovsky E."/>
            <person name="Zhu S."/>
            <person name="Zimmer A."/>
            <person name="Hide W."/>
            <person name="Bult C."/>
            <person name="Grimmond S.M."/>
            <person name="Teasdale R.D."/>
            <person name="Liu E.T."/>
            <person name="Brusic V."/>
            <person name="Quackenbush J."/>
            <person name="Wahlestedt C."/>
            <person name="Mattick J.S."/>
            <person name="Hume D.A."/>
            <person name="Kai C."/>
            <person name="Sasaki D."/>
            <person name="Tomaru Y."/>
            <person name="Fukuda S."/>
            <person name="Kanamori-Katayama M."/>
            <person name="Suzuki M."/>
            <person name="Aoki J."/>
            <person name="Arakawa T."/>
            <person name="Iida J."/>
            <person name="Imamura K."/>
            <person name="Itoh M."/>
            <person name="Kato T."/>
            <person name="Kawaji H."/>
            <person name="Kawagashira N."/>
            <person name="Kawashima T."/>
            <person name="Kojima M."/>
            <person name="Kondo S."/>
            <person name="Konno H."/>
            <person name="Nakano K."/>
            <person name="Ninomiya N."/>
            <person name="Nishio T."/>
            <person name="Okada M."/>
            <person name="Plessy C."/>
            <person name="Shibata K."/>
            <person name="Shiraki T."/>
            <person name="Suzuki S."/>
            <person name="Tagami M."/>
            <person name="Waki K."/>
            <person name="Watahiki A."/>
            <person name="Okamura-Oho Y."/>
            <person name="Suzuki H."/>
            <person name="Kawai J."/>
            <person name="Hayashizaki Y."/>
        </authorList>
    </citation>
    <scope>NUCLEOTIDE SEQUENCE [LARGE SCALE MRNA]</scope>
    <source>
        <strain>NOD</strain>
        <tissue>Spleen</tissue>
    </source>
</reference>
<reference key="5">
    <citation type="journal article" date="2009" name="PLoS Biol.">
        <title>Lineage-specific biology revealed by a finished genome assembly of the mouse.</title>
        <authorList>
            <person name="Church D.M."/>
            <person name="Goodstadt L."/>
            <person name="Hillier L.W."/>
            <person name="Zody M.C."/>
            <person name="Goldstein S."/>
            <person name="She X."/>
            <person name="Bult C.J."/>
            <person name="Agarwala R."/>
            <person name="Cherry J.L."/>
            <person name="DiCuccio M."/>
            <person name="Hlavina W."/>
            <person name="Kapustin Y."/>
            <person name="Meric P."/>
            <person name="Maglott D."/>
            <person name="Birtle Z."/>
            <person name="Marques A.C."/>
            <person name="Graves T."/>
            <person name="Zhou S."/>
            <person name="Teague B."/>
            <person name="Potamousis K."/>
            <person name="Churas C."/>
            <person name="Place M."/>
            <person name="Herschleb J."/>
            <person name="Runnheim R."/>
            <person name="Forrest D."/>
            <person name="Amos-Landgraf J."/>
            <person name="Schwartz D.C."/>
            <person name="Cheng Z."/>
            <person name="Lindblad-Toh K."/>
            <person name="Eichler E.E."/>
            <person name="Ponting C.P."/>
        </authorList>
    </citation>
    <scope>NUCLEOTIDE SEQUENCE [LARGE SCALE GENOMIC DNA]</scope>
    <source>
        <strain>C57BL/6J</strain>
    </source>
</reference>
<reference key="6">
    <citation type="journal article" date="2001" name="Oncogene">
        <title>Association of UNP, a ubiquitin-specific protease, with the pocket proteins pRb, p107 and p130.</title>
        <authorList>
            <person name="Blanchette P."/>
            <person name="Gilchrist C.A."/>
            <person name="Baker R.T."/>
            <person name="Gray D.A."/>
        </authorList>
    </citation>
    <scope>INTERACTION WITH USP4</scope>
</reference>
<reference key="7">
    <citation type="journal article" date="2005" name="Nat. Cell Biol.">
        <title>Role of the RB1 family in stabilizing histone methylation at constitutive heterochromatin.</title>
        <authorList>
            <person name="Gonzalo S."/>
            <person name="Garcia-Cao M."/>
            <person name="Fraga M.F."/>
            <person name="Schotta G."/>
            <person name="Peters A.H.F.M."/>
            <person name="Cotter S.E."/>
            <person name="Eguia R."/>
            <person name="Dean D.C."/>
            <person name="Esteller M."/>
            <person name="Jenuwein T."/>
            <person name="Blasco M.A."/>
        </authorList>
    </citation>
    <scope>FUNCTION</scope>
    <scope>INTERACTION WITH KMT5B AND KMT5C</scope>
</reference>
<reference key="8">
    <citation type="journal article" date="2007" name="Proc. Natl. Acad. Sci. U.S.A.">
        <title>Large-scale phosphorylation analysis of mouse liver.</title>
        <authorList>
            <person name="Villen J."/>
            <person name="Beausoleil S.A."/>
            <person name="Gerber S.A."/>
            <person name="Gygi S.P."/>
        </authorList>
    </citation>
    <scope>PHOSPHORYLATION [LARGE SCALE ANALYSIS] AT SER-1036</scope>
    <scope>IDENTIFICATION BY MASS SPECTROMETRY [LARGE SCALE ANALYSIS]</scope>
    <source>
        <tissue>Liver</tissue>
    </source>
</reference>
<reference key="9">
    <citation type="journal article" date="2010" name="Cell">
        <title>A tissue-specific atlas of mouse protein phosphorylation and expression.</title>
        <authorList>
            <person name="Huttlin E.L."/>
            <person name="Jedrychowski M.P."/>
            <person name="Elias J.E."/>
            <person name="Goswami T."/>
            <person name="Rad R."/>
            <person name="Beausoleil S.A."/>
            <person name="Villen J."/>
            <person name="Haas W."/>
            <person name="Sowa M.E."/>
            <person name="Gygi S.P."/>
        </authorList>
    </citation>
    <scope>PHOSPHORYLATION [LARGE SCALE ANALYSIS] AT THR-332; SER-959 AND SER-1036</scope>
    <scope>IDENTIFICATION BY MASS SPECTROMETRY [LARGE SCALE ANALYSIS]</scope>
    <source>
        <tissue>Kidney</tissue>
        <tissue>Lung</tissue>
        <tissue>Spleen</tissue>
        <tissue>Testis</tissue>
    </source>
</reference>
<feature type="chain" id="PRO_0000167840" description="Retinoblastoma-like protein 1">
    <location>
        <begin position="1"/>
        <end position="1063"/>
    </location>
</feature>
<feature type="region of interest" description="Pocket; binds T and E1A" evidence="2">
    <location>
        <begin position="383"/>
        <end position="944"/>
    </location>
</feature>
<feature type="region of interest" description="Domain A" evidence="6">
    <location>
        <begin position="383"/>
        <end position="584"/>
    </location>
</feature>
<feature type="region of interest" description="Spacer" evidence="6">
    <location>
        <begin position="585"/>
        <end position="779"/>
    </location>
</feature>
<feature type="region of interest" description="Domain B" evidence="6">
    <location>
        <begin position="780"/>
        <end position="944"/>
    </location>
</feature>
<feature type="modified residue" description="Phosphothreonine" evidence="8">
    <location>
        <position position="332"/>
    </location>
</feature>
<feature type="modified residue" description="Phosphothreonine" evidence="2">
    <location>
        <position position="369"/>
    </location>
</feature>
<feature type="modified residue" description="Phosphothreonine" evidence="2">
    <location>
        <position position="385"/>
    </location>
</feature>
<feature type="modified residue" description="Phosphoserine" evidence="2">
    <location>
        <position position="640"/>
    </location>
</feature>
<feature type="modified residue" description="Phosphoserine" evidence="2">
    <location>
        <position position="650"/>
    </location>
</feature>
<feature type="modified residue" description="Phosphoserine" evidence="2">
    <location>
        <position position="748"/>
    </location>
</feature>
<feature type="modified residue" description="Phosphoserine" evidence="2">
    <location>
        <position position="761"/>
    </location>
</feature>
<feature type="modified residue" description="Phosphoserine" evidence="8">
    <location>
        <position position="959"/>
    </location>
</feature>
<feature type="modified residue" description="Phosphoserine" evidence="2">
    <location>
        <position position="970"/>
    </location>
</feature>
<feature type="modified residue" description="Phosphoserine" evidence="2">
    <location>
        <position position="983"/>
    </location>
</feature>
<feature type="modified residue" description="Phosphothreonine" evidence="2">
    <location>
        <position position="992"/>
    </location>
</feature>
<feature type="modified residue" description="Phosphoserine" evidence="2">
    <location>
        <position position="1004"/>
    </location>
</feature>
<feature type="modified residue" description="Phosphoserine" evidence="7 8">
    <location>
        <position position="1036"/>
    </location>
</feature>
<feature type="splice variant" id="VSP_005537" description="In isoform Short." evidence="5">
    <original>IFP</original>
    <variation>SQG</variation>
    <location>
        <begin position="592"/>
        <end position="594"/>
    </location>
</feature>
<feature type="splice variant" id="VSP_005538" description="In isoform Short." evidence="5">
    <location>
        <begin position="595"/>
        <end position="1063"/>
    </location>
</feature>
<feature type="sequence conflict" description="In Ref. 1; AAB18279." evidence="6" ref="1">
    <original>Q</original>
    <variation>P</variation>
    <location>
        <position position="26"/>
    </location>
</feature>
<feature type="sequence conflict" description="In Ref. 1; AAB18279." evidence="6" ref="1">
    <original>I</original>
    <variation>T</variation>
    <location>
        <position position="430"/>
    </location>
</feature>
<feature type="sequence conflict" description="In Ref. 2; AAB53235." evidence="6" ref="2">
    <original>I</original>
    <variation>R</variation>
    <location>
        <position position="863"/>
    </location>
</feature>
<feature type="sequence conflict" description="In Ref. 1; AAB18279." evidence="6" ref="1">
    <original>A</original>
    <variation>C</variation>
    <location>
        <position position="989"/>
    </location>
</feature>
<evidence type="ECO:0000250" key="1">
    <source>
        <dbReference type="UniProtKB" id="D3ZS28"/>
    </source>
</evidence>
<evidence type="ECO:0000250" key="2">
    <source>
        <dbReference type="UniProtKB" id="P28749"/>
    </source>
</evidence>
<evidence type="ECO:0000269" key="3">
    <source>
    </source>
</evidence>
<evidence type="ECO:0000269" key="4">
    <source>
    </source>
</evidence>
<evidence type="ECO:0000303" key="5">
    <source>
    </source>
</evidence>
<evidence type="ECO:0000305" key="6"/>
<evidence type="ECO:0007744" key="7">
    <source>
    </source>
</evidence>
<evidence type="ECO:0007744" key="8">
    <source>
    </source>
</evidence>
<accession>Q64701</accession>
<accession>Q3U1D4</accession>
<organism>
    <name type="scientific">Mus musculus</name>
    <name type="common">Mouse</name>
    <dbReference type="NCBI Taxonomy" id="10090"/>
    <lineage>
        <taxon>Eukaryota</taxon>
        <taxon>Metazoa</taxon>
        <taxon>Chordata</taxon>
        <taxon>Craniata</taxon>
        <taxon>Vertebrata</taxon>
        <taxon>Euteleostomi</taxon>
        <taxon>Mammalia</taxon>
        <taxon>Eutheria</taxon>
        <taxon>Euarchontoglires</taxon>
        <taxon>Glires</taxon>
        <taxon>Rodentia</taxon>
        <taxon>Myomorpha</taxon>
        <taxon>Muroidea</taxon>
        <taxon>Muridae</taxon>
        <taxon>Murinae</taxon>
        <taxon>Mus</taxon>
        <taxon>Mus</taxon>
    </lineage>
</organism>
<dbReference type="EMBL" id="U33320">
    <property type="protein sequence ID" value="AAB18279.1"/>
    <property type="molecule type" value="mRNA"/>
</dbReference>
<dbReference type="EMBL" id="U27177">
    <property type="protein sequence ID" value="AAB53235.1"/>
    <property type="molecule type" value="mRNA"/>
</dbReference>
<dbReference type="EMBL" id="U27178">
    <property type="protein sequence ID" value="AAB53236.1"/>
    <property type="molecule type" value="mRNA"/>
</dbReference>
<dbReference type="EMBL" id="AK156055">
    <property type="protein sequence ID" value="BAE33564.1"/>
    <property type="molecule type" value="mRNA"/>
</dbReference>
<dbReference type="EMBL" id="AL669828">
    <property type="status" value="NOT_ANNOTATED_CDS"/>
    <property type="molecule type" value="Genomic_DNA"/>
</dbReference>
<dbReference type="CCDS" id="CCDS16974.1">
    <molecule id="Q64701-1"/>
</dbReference>
<dbReference type="PIR" id="I49328">
    <property type="entry name" value="I49328"/>
</dbReference>
<dbReference type="RefSeq" id="NP_001132988.1">
    <molecule id="Q64701-2"/>
    <property type="nucleotide sequence ID" value="NM_001139516.1"/>
</dbReference>
<dbReference type="RefSeq" id="NP_035379.2">
    <molecule id="Q64701-1"/>
    <property type="nucleotide sequence ID" value="NM_011249.2"/>
</dbReference>
<dbReference type="SMR" id="Q64701"/>
<dbReference type="BioGRID" id="202819">
    <property type="interactions" value="29"/>
</dbReference>
<dbReference type="CORUM" id="Q64701"/>
<dbReference type="FunCoup" id="Q64701">
    <property type="interactions" value="3550"/>
</dbReference>
<dbReference type="IntAct" id="Q64701">
    <property type="interactions" value="4"/>
</dbReference>
<dbReference type="STRING" id="10090.ENSMUSP00000029170"/>
<dbReference type="GlyGen" id="Q64701">
    <property type="glycosylation" value="3 sites, 1 O-linked glycan (3 sites)"/>
</dbReference>
<dbReference type="iPTMnet" id="Q64701"/>
<dbReference type="PhosphoSitePlus" id="Q64701"/>
<dbReference type="jPOST" id="Q64701"/>
<dbReference type="PaxDb" id="10090-ENSMUSP00000029170"/>
<dbReference type="PeptideAtlas" id="Q64701"/>
<dbReference type="ProteomicsDB" id="300314">
    <molecule id="Q64701-1"/>
</dbReference>
<dbReference type="ProteomicsDB" id="300315">
    <molecule id="Q64701-2"/>
</dbReference>
<dbReference type="Pumba" id="Q64701"/>
<dbReference type="Antibodypedia" id="11876">
    <property type="antibodies" value="429 antibodies from 35 providers"/>
</dbReference>
<dbReference type="DNASU" id="19650"/>
<dbReference type="Ensembl" id="ENSMUST00000029170.8">
    <molecule id="Q64701-1"/>
    <property type="protein sequence ID" value="ENSMUSP00000029170.8"/>
    <property type="gene ID" value="ENSMUSG00000027641.14"/>
</dbReference>
<dbReference type="GeneID" id="19650"/>
<dbReference type="KEGG" id="mmu:19650"/>
<dbReference type="UCSC" id="uc008noq.2">
    <molecule id="Q64701-1"/>
    <property type="organism name" value="mouse"/>
</dbReference>
<dbReference type="UCSC" id="uc008nos.2">
    <molecule id="Q64701-2"/>
    <property type="organism name" value="mouse"/>
</dbReference>
<dbReference type="AGR" id="MGI:103300"/>
<dbReference type="CTD" id="5933"/>
<dbReference type="MGI" id="MGI:103300">
    <property type="gene designation" value="Rbl1"/>
</dbReference>
<dbReference type="VEuPathDB" id="HostDB:ENSMUSG00000027641"/>
<dbReference type="eggNOG" id="KOG1010">
    <property type="taxonomic scope" value="Eukaryota"/>
</dbReference>
<dbReference type="GeneTree" id="ENSGT00950000183202"/>
<dbReference type="HOGENOM" id="CLU_008943_0_1_1"/>
<dbReference type="InParanoid" id="Q64701"/>
<dbReference type="OMA" id="AILCELH"/>
<dbReference type="OrthoDB" id="844594at2759"/>
<dbReference type="PhylomeDB" id="Q64701"/>
<dbReference type="TreeFam" id="TF105568"/>
<dbReference type="Reactome" id="R-MMU-1538133">
    <property type="pathway name" value="G0 and Early G1"/>
</dbReference>
<dbReference type="Reactome" id="R-MMU-2173796">
    <property type="pathway name" value="SMAD2/SMAD3:SMAD4 heterotrimer regulates transcription"/>
</dbReference>
<dbReference type="Reactome" id="R-MMU-69231">
    <property type="pathway name" value="Cyclin D associated events in G1"/>
</dbReference>
<dbReference type="BioGRID-ORCS" id="19650">
    <property type="hits" value="6 hits in 80 CRISPR screens"/>
</dbReference>
<dbReference type="ChiTaRS" id="Rbl1">
    <property type="organism name" value="mouse"/>
</dbReference>
<dbReference type="PRO" id="PR:Q64701"/>
<dbReference type="Proteomes" id="UP000000589">
    <property type="component" value="Chromosome 2"/>
</dbReference>
<dbReference type="RNAct" id="Q64701">
    <property type="molecule type" value="protein"/>
</dbReference>
<dbReference type="Bgee" id="ENSMUSG00000027641">
    <property type="expression patterns" value="Expressed in paneth cell and 203 other cell types or tissues"/>
</dbReference>
<dbReference type="GO" id="GO:0005654">
    <property type="term" value="C:nucleoplasm"/>
    <property type="evidence" value="ECO:0000304"/>
    <property type="project" value="Reactome"/>
</dbReference>
<dbReference type="GO" id="GO:0005634">
    <property type="term" value="C:nucleus"/>
    <property type="evidence" value="ECO:0000314"/>
    <property type="project" value="MGI"/>
</dbReference>
<dbReference type="GO" id="GO:0005667">
    <property type="term" value="C:transcription regulator complex"/>
    <property type="evidence" value="ECO:0000314"/>
    <property type="project" value="MGI"/>
</dbReference>
<dbReference type="GO" id="GO:1990841">
    <property type="term" value="F:promoter-specific chromatin binding"/>
    <property type="evidence" value="ECO:0000314"/>
    <property type="project" value="MGI"/>
</dbReference>
<dbReference type="GO" id="GO:0006325">
    <property type="term" value="P:chromatin organization"/>
    <property type="evidence" value="ECO:0007669"/>
    <property type="project" value="UniProtKB-KW"/>
</dbReference>
<dbReference type="GO" id="GO:2000773">
    <property type="term" value="P:negative regulation of cellular senescence"/>
    <property type="evidence" value="ECO:0007669"/>
    <property type="project" value="Ensembl"/>
</dbReference>
<dbReference type="GO" id="GO:0010629">
    <property type="term" value="P:negative regulation of gene expression"/>
    <property type="evidence" value="ECO:0000266"/>
    <property type="project" value="MGI"/>
</dbReference>
<dbReference type="GO" id="GO:0000122">
    <property type="term" value="P:negative regulation of transcription by RNA polymerase II"/>
    <property type="evidence" value="ECO:0000314"/>
    <property type="project" value="MGI"/>
</dbReference>
<dbReference type="GO" id="GO:0051726">
    <property type="term" value="P:regulation of cell cycle"/>
    <property type="evidence" value="ECO:0007669"/>
    <property type="project" value="InterPro"/>
</dbReference>
<dbReference type="CDD" id="cd20605">
    <property type="entry name" value="CYCLIN_RBL1"/>
    <property type="match status" value="1"/>
</dbReference>
<dbReference type="FunFam" id="1.10.472.10:FF:000035">
    <property type="entry name" value="RB transcriptional corepressor-like 1"/>
    <property type="match status" value="1"/>
</dbReference>
<dbReference type="FunFam" id="1.10.472.140:FF:000001">
    <property type="entry name" value="Retinoblastoma-like 2, isoform CRA_a"/>
    <property type="match status" value="1"/>
</dbReference>
<dbReference type="FunFam" id="1.10.472.10:FF:000082">
    <property type="entry name" value="retinoblastoma-like protein 1 isoform X1"/>
    <property type="match status" value="1"/>
</dbReference>
<dbReference type="Gene3D" id="1.10.472.140">
    <property type="match status" value="1"/>
</dbReference>
<dbReference type="Gene3D" id="1.10.472.10">
    <property type="entry name" value="Cyclin-like"/>
    <property type="match status" value="3"/>
</dbReference>
<dbReference type="InterPro" id="IPR013763">
    <property type="entry name" value="Cyclin-like_dom"/>
</dbReference>
<dbReference type="InterPro" id="IPR036915">
    <property type="entry name" value="Cyclin-like_sf"/>
</dbReference>
<dbReference type="InterPro" id="IPR002720">
    <property type="entry name" value="RB_A"/>
</dbReference>
<dbReference type="InterPro" id="IPR002719">
    <property type="entry name" value="RB_B"/>
</dbReference>
<dbReference type="InterPro" id="IPR015030">
    <property type="entry name" value="RB_C"/>
</dbReference>
<dbReference type="InterPro" id="IPR028309">
    <property type="entry name" value="RB_fam"/>
</dbReference>
<dbReference type="InterPro" id="IPR024599">
    <property type="entry name" value="RB_N"/>
</dbReference>
<dbReference type="PANTHER" id="PTHR13742">
    <property type="entry name" value="RETINOBLASTOMA-ASSOCIATED PROTEIN RB -RELATED"/>
    <property type="match status" value="1"/>
</dbReference>
<dbReference type="PANTHER" id="PTHR13742:SF20">
    <property type="entry name" value="RETINOBLASTOMA-LIKE PROTEIN 1"/>
    <property type="match status" value="1"/>
</dbReference>
<dbReference type="Pfam" id="PF11934">
    <property type="entry name" value="DUF3452"/>
    <property type="match status" value="1"/>
</dbReference>
<dbReference type="Pfam" id="PF01858">
    <property type="entry name" value="RB_A"/>
    <property type="match status" value="1"/>
</dbReference>
<dbReference type="Pfam" id="PF01857">
    <property type="entry name" value="RB_B"/>
    <property type="match status" value="1"/>
</dbReference>
<dbReference type="Pfam" id="PF08934">
    <property type="entry name" value="Rb_C"/>
    <property type="match status" value="1"/>
</dbReference>
<dbReference type="SMART" id="SM00385">
    <property type="entry name" value="CYCLIN"/>
    <property type="match status" value="1"/>
</dbReference>
<dbReference type="SMART" id="SM01367">
    <property type="entry name" value="DUF3452"/>
    <property type="match status" value="1"/>
</dbReference>
<dbReference type="SMART" id="SM01368">
    <property type="entry name" value="RB_A"/>
    <property type="match status" value="1"/>
</dbReference>
<dbReference type="SMART" id="SM01369">
    <property type="entry name" value="Rb_C"/>
    <property type="match status" value="1"/>
</dbReference>
<dbReference type="SUPFAM" id="SSF47954">
    <property type="entry name" value="Cyclin-like"/>
    <property type="match status" value="2"/>
</dbReference>
<gene>
    <name type="primary">Rbl1</name>
</gene>
<sequence length="1063" mass="119456">MFEDEPHAEGAAAVAAAREALQALCQELNLDEGSAAEALDDFTAIRGNYSLEGEVIHWLACSLYVACRKSIIPTVGKGVMEGNCVSLTRILRSAKLSLIQFFSKMKKWMDMSNLPQEFRERIERLERNFEVSTVIFKKFEPIFLDIFQNPYEEPPKLPRSRKQRRIPCSVKDLFNFCWTLFVYTKGNFRMIGDDLVNSYHLLLCCLDLIFANAIMCPNRRDLLNPSFKGLPSDFHAPDFKAAEEPPCIIAVLCDLHDGLLVEAKGIKEHYFKPYISKLFDKKILKGECLLDLSSFTDNSKAVNKEYEEYVLTVGDFDERIFLGADAEEEIGTPRKFTADTPFGKLTSQASVECNLQQHFEKKRSFAPSTPLTGRRYLQEKEAVTTPVASATQSVSRLQSIVAGLKSAPSEQLLNIFESCMRNPMGNIIKIVKGIGETFCQHYTQSTDKQPGSHIDFAVNRLKLAEILYYKILETIMVQETRRLHGMDMSVLLEQDIFHKSLMACCLEIVLFAYSSPRTFPWIIEVLDLQPFYFYKVIEVVIRSEEGLSRDMVKHLNSIEEQILESLAWTNNSALWEALHASANRVPSCEEVIFPNNFEIGNGGNVQGHLPMMPMSPIIHPRVKEVRTDSGSLRQDMQPLSPISVHERYSSPAAGSAKRRLFGDDPPKDTLMDKIMAEGTKLKIAPSSVTAESLSISPGQALLTMATTTVTGTTGRKVTVPLHGIANDAGEITLVPISMNPTQESTAESPVSLTAQSLIGTSPKQTHLTKAQDAHLTGVSKPKRTGSLALFYRKVYHLASVRLRDLCLKLDVSNELRRKIWTCFEFTLVHCPDLMKDRHLDQLLLCAFYIMAKVTKEERTFQEIMKSYRNQPQANSHVYRSVLLKSIPGGVVVYNGDCEMTDGDIEDATKTPNCSSEPVKEERGDLIKFYNTVYVGRVKSFALKYDLSNQDHIMDAPPLSPFPHIKQQPGSPRRISQQHSLYVSPHKNGAGLTPRSALLYKFNGSPSKSLKDINNMIRQGEQKTKKRVIAISGDADSPAKRLCQENDDVLLKRLQDVVSERANH</sequence>
<comment type="function">
    <text evidence="2 4">Key regulator of entry into cell division (By similarity). Directly involved in heterochromatin formation by maintaining overall chromatin structure and, in particular, that of constitutive heterochromatin by stabilizing histone methylation (PubMed:15750587). Recruits and targets histone methyltransferases KMT5B and KMT5C, leading to epigenetic transcriptional repression (PubMed:15750587). Controls histone H4 'Lys-20' trimethylation (PubMed:15750587). Probably acts as a transcription repressor by recruiting chromatin-modifying enzymes to promoters (PubMed:15750587). Potent inhibitor of E2F-mediated trans-activation (By similarity). May act as a tumor suppressor (By similarity).</text>
</comment>
<comment type="subunit">
    <text evidence="1 2 3 4">Component of the DREAM complex (also named LINC complex) at least composed of E2F4, E2F5, LIN9, LIN37, LIN52, LIN54, MYBL1, MYBL2, RBL1, RBL2, RBBP4, TFDP1 and TFDP2 (By similarity). The complex exists in quiescent cells where it represses cell cycle-dependent genes (By similarity). It dissociates in S phase when LIN9, LIN37, LIN52 and LIN54 form a subcomplex that binds to MYBL2 (By similarity). Interacts with AATF (By similarity). Interacts with KDM5A (By similarity). Interacts with KMT5B and KMT5C (PubMed:11571651). Interacts with USP4 (PubMed:15750587). Interacts with RBBP9 (By similarity).</text>
</comment>
<comment type="interaction">
    <interactant intactId="EBI-1213109">
        <id>Q64701</id>
    </interactant>
    <interactant intactId="EBI-2211248">
        <id>Q155P7</id>
        <label>Cenpf</label>
    </interactant>
    <organismsDiffer>false</organismsDiffer>
    <experiments>3</experiments>
</comment>
<comment type="subcellular location">
    <subcellularLocation>
        <location evidence="6">Nucleus</location>
    </subcellularLocation>
</comment>
<comment type="alternative products">
    <event type="alternative splicing"/>
    <isoform>
        <id>Q64701-1</id>
        <name>Long</name>
        <sequence type="displayed"/>
    </isoform>
    <isoform>
        <id>Q64701-2</id>
        <name>Short</name>
        <sequence type="described" ref="VSP_005537 VSP_005538"/>
    </isoform>
</comment>
<comment type="tissue specificity">
    <text>Highly expressed in fetal heart and liver. Expressed at low levels in all other fetal tissues except skeletal muscle. High levels in neonatal spleen and thymus with low levels in other tissues. In adult, highly expressed in testis. Barely detectable in other tissues.</text>
</comment>
<comment type="developmental stage">
    <text>Highly expressed in fetal tissues. Expression markedly decreased in adult.</text>
</comment>
<comment type="PTM">
    <text evidence="2">Cell-cycle arrest properties are inactivated by phosphorylation on Thr-332, Ser-640, Ser-959 and Ser-970 by CDK4.</text>
</comment>
<comment type="similarity">
    <text evidence="6">Belongs to the retinoblastoma protein (RB) family.</text>
</comment>
<protein>
    <recommendedName>
        <fullName>Retinoblastoma-like protein 1</fullName>
    </recommendedName>
    <alternativeName>
        <fullName>107 kDa retinoblastoma-associated protein</fullName>
        <shortName>p107</shortName>
    </alternativeName>
    <alternativeName>
        <fullName>pRb1</fullName>
    </alternativeName>
</protein>
<keyword id="KW-0025">Alternative splicing</keyword>
<keyword id="KW-0131">Cell cycle</keyword>
<keyword id="KW-0156">Chromatin regulator</keyword>
<keyword id="KW-0539">Nucleus</keyword>
<keyword id="KW-0597">Phosphoprotein</keyword>
<keyword id="KW-1185">Reference proteome</keyword>
<keyword id="KW-0678">Repressor</keyword>
<keyword id="KW-0804">Transcription</keyword>
<keyword id="KW-0805">Transcription regulation</keyword>
<keyword id="KW-0043">Tumor suppressor</keyword>
<name>RBL1_MOUSE</name>